<reference key="1">
    <citation type="submission" date="2004-10" db="EMBL/GenBank/DDBJ databases">
        <authorList>
            <consortium name="NIH - Xenopus Gene Collection (XGC) project"/>
        </authorList>
    </citation>
    <scope>NUCLEOTIDE SEQUENCE [LARGE SCALE MRNA]</scope>
    <source>
        <tissue>Embryo</tissue>
    </source>
</reference>
<sequence>MGFISYFSSFLPDIPWHFWGSVDSLLQGLVGACAVSVLYNLTRVHLYIMCLNDPDKQKEAAQLRAQSLLMDFLHVSLLTLIYSLLGPRVGALVVLEFSLRAVSMVLSVSKGAGSSQLFLLCQFSLGCGVSCSLDYLHEGAPHRTWNLLLAVGLSWLILWQSRRMCRHVGIMYQLHSRERYCGVCLSLLASWHDIPPFLRRALKVAFLVSDLAAVAVINRDFLSTSEAMRFWTPLTICYTLLVIYMQEEQQQNPSEQMVYQTVFVRMGGLLILMMTVGRWADILHIFISLTGEIWCLIHAGVMLRICREQDFADRISSPRKAPISRGSIYTRDGRTLQRETSLEE</sequence>
<organism>
    <name type="scientific">Xenopus laevis</name>
    <name type="common">African clawed frog</name>
    <dbReference type="NCBI Taxonomy" id="8355"/>
    <lineage>
        <taxon>Eukaryota</taxon>
        <taxon>Metazoa</taxon>
        <taxon>Chordata</taxon>
        <taxon>Craniata</taxon>
        <taxon>Vertebrata</taxon>
        <taxon>Euteleostomi</taxon>
        <taxon>Amphibia</taxon>
        <taxon>Batrachia</taxon>
        <taxon>Anura</taxon>
        <taxon>Pipoidea</taxon>
        <taxon>Pipidae</taxon>
        <taxon>Xenopodinae</taxon>
        <taxon>Xenopus</taxon>
        <taxon>Xenopus</taxon>
    </lineage>
</organism>
<name>TMM82_XENLA</name>
<evidence type="ECO:0000255" key="1"/>
<evidence type="ECO:0000305" key="2"/>
<gene>
    <name type="primary">tmem82</name>
</gene>
<comment type="subcellular location">
    <subcellularLocation>
        <location evidence="2">Membrane</location>
        <topology evidence="2">Multi-pass membrane protein</topology>
    </subcellularLocation>
</comment>
<comment type="similarity">
    <text evidence="2">Belongs to the TMEM82 family.</text>
</comment>
<proteinExistence type="evidence at transcript level"/>
<dbReference type="EMBL" id="BC084667">
    <property type="protein sequence ID" value="AAH84667.1"/>
    <property type="molecule type" value="mRNA"/>
</dbReference>
<dbReference type="RefSeq" id="NP_001088392.1">
    <property type="nucleotide sequence ID" value="NM_001094923.1"/>
</dbReference>
<dbReference type="DNASU" id="495245"/>
<dbReference type="GeneID" id="495245"/>
<dbReference type="KEGG" id="xla:495245"/>
<dbReference type="AGR" id="Xenbase:XB-GENE-5916351"/>
<dbReference type="CTD" id="495245"/>
<dbReference type="Xenbase" id="XB-GENE-5916351">
    <property type="gene designation" value="tmem82.L"/>
</dbReference>
<dbReference type="OrthoDB" id="9943056at2759"/>
<dbReference type="Proteomes" id="UP000186698">
    <property type="component" value="Chromosome 7L"/>
</dbReference>
<dbReference type="Bgee" id="495245">
    <property type="expression patterns" value="Expressed in liver and 17 other cell types or tissues"/>
</dbReference>
<dbReference type="GO" id="GO:0016020">
    <property type="term" value="C:membrane"/>
    <property type="evidence" value="ECO:0007669"/>
    <property type="project" value="UniProtKB-SubCell"/>
</dbReference>
<dbReference type="InterPro" id="IPR031648">
    <property type="entry name" value="TMEM82"/>
</dbReference>
<dbReference type="PANTHER" id="PTHR35257">
    <property type="entry name" value="TRANSMEMBRANE PROTEIN 82"/>
    <property type="match status" value="1"/>
</dbReference>
<dbReference type="PANTHER" id="PTHR35257:SF1">
    <property type="entry name" value="TRANSMEMBRANE PROTEIN 82"/>
    <property type="match status" value="1"/>
</dbReference>
<dbReference type="Pfam" id="PF15816">
    <property type="entry name" value="TMEM82"/>
    <property type="match status" value="1"/>
</dbReference>
<keyword id="KW-0472">Membrane</keyword>
<keyword id="KW-1185">Reference proteome</keyword>
<keyword id="KW-0812">Transmembrane</keyword>
<keyword id="KW-1133">Transmembrane helix</keyword>
<protein>
    <recommendedName>
        <fullName>Transmembrane protein 82</fullName>
    </recommendedName>
</protein>
<feature type="chain" id="PRO_0000309238" description="Transmembrane protein 82">
    <location>
        <begin position="1"/>
        <end position="344"/>
    </location>
</feature>
<feature type="transmembrane region" description="Helical" evidence="1">
    <location>
        <begin position="18"/>
        <end position="38"/>
    </location>
</feature>
<feature type="transmembrane region" description="Helical" evidence="1">
    <location>
        <begin position="75"/>
        <end position="95"/>
    </location>
</feature>
<feature type="transmembrane region" description="Helical" evidence="1">
    <location>
        <begin position="117"/>
        <end position="137"/>
    </location>
</feature>
<feature type="transmembrane region" description="Helical" evidence="1">
    <location>
        <begin position="139"/>
        <end position="159"/>
    </location>
</feature>
<feature type="transmembrane region" description="Helical" evidence="1">
    <location>
        <begin position="201"/>
        <end position="217"/>
    </location>
</feature>
<feature type="transmembrane region" description="Helical" evidence="1">
    <location>
        <begin position="228"/>
        <end position="244"/>
    </location>
</feature>
<feature type="transmembrane region" description="Helical" evidence="1">
    <location>
        <begin position="257"/>
        <end position="277"/>
    </location>
</feature>
<feature type="transmembrane region" description="Helical" evidence="1">
    <location>
        <begin position="282"/>
        <end position="302"/>
    </location>
</feature>
<accession>Q5XG04</accession>